<name>RPOC_NEIMF</name>
<sequence length="1391" mass="153862">MNLLNLFNPLQTAGMEEEFDAIKIGIASPETIRSWSYGEVKKPETINYRTFKPERDGLFCAKIFGPVKDYECLCGKYKRLKFKGVTCEKCGVEVTLSKVRRERMGHIELAAPVAHIWFLKSLPSRLGMVLDMTLRDIERVLYFEAFVVTDPGMTPLQRRQLLTEDDYYNKLDEYGDDFDAKMGAEGIRELLRTLNVAGEIEILRQELESTGSDTKIKKIAKRLKVLEAFHRSGMKLEWMIMDVLPVLPPDLRPLVPLDGGRFATSDLNDLYRRVINRNNRLKRLLELHAPDIIVRNEKRMLQEAVDSLLDNGRRGKAMTGANKRPLKSLADMIKGKGGRFRQNLLGKRVDYSGRSVITVGPYLRLHQCGLPKKMALELFKPFIFHKLEKQGLASTVKAAKKLVEQEVPEVWDILEEVIREHPIMLNRAPTLHRLGIQAFEPILIEGKAIQLHPLVCAAFNADFDGDQMAVHVPLSLEAQMEARTLMLASNNVLSPANGEPIIVPSQDIVLGLYYMTRDRINAKGEGSLFADVKEVHRAYHTKQVELGTKITVRLREWVKNEAGEFEPVVNRYETTVGRALLSEILPKGLPFEYVNKALKKKEISKLINASFRLCGLRDTVIFADHLMYTGFGFAAKGGISIAVDDMEIPKEKVALLAEANAEVKEIEDQYRQGLVTNGERYNKVVDIWGRAGDKIAKAMMDNLSKQKVIDRDGNEVDQESFNSIYMMADSGARGSAAQIKQLSGMRGLMAKPDGSIIETPITSNFREGLTVLQYFIATHGARKGLADTALKTANSGYLTRRLVDVTQDLVVVEDDCGTSDGFVMKAVVQGGDVIEALRERILGRVTASDVVDPSSGETLVEAGTLLTEKLVDMIDQSGVDEVKVRTPITCKTRHGLCAHCYGRDLARGKLVNAGEAVGVIAAQSIGEPGTQLTMRTFHIGGAASRAAAASQVEAKSNGTARFSSQMRYVANNKGELVVIGRSCEVVIHDDIGRERERHKVPYGAILLVQDGMAIKAGQTLATWDPHTRPMITEHAGMVKFENVEEGVTVAKQTDDVTGLSTLVVIDGKRRSSSASKLLRPTVKLLDENGVEICIPGTSTPVSMAFPVGAVITVREGQEIGKGDVLARIPQASSKTRDITGGLPRVAELFEARVPKDAGMLAEITGTVSFGKETKGKQRLIITDVDGVAYETLISKEKQILVHDGQVVNRGETIVDGAVDPHDILRLQGIEALARYIVQEVQEVYRLQGVKISDKHIEVIIRQMLRRVNIADAGETGFITGEQVERGDVMAANEKALEEGKEPARYENVLLGITKASLSTDSFISAASFQETTRVLTEAAIMGKQDELRGLKENVIVGRLIPAGTGLTYHRSRHQQWQEVEQETAETQVTDE</sequence>
<gene>
    <name evidence="1" type="primary">rpoC</name>
    <name type="ordered locus">NMC0124</name>
</gene>
<feature type="chain" id="PRO_0000308866" description="DNA-directed RNA polymerase subunit beta'">
    <location>
        <begin position="1"/>
        <end position="1391"/>
    </location>
</feature>
<feature type="binding site" evidence="1">
    <location>
        <position position="72"/>
    </location>
    <ligand>
        <name>Zn(2+)</name>
        <dbReference type="ChEBI" id="CHEBI:29105"/>
        <label>1</label>
    </ligand>
</feature>
<feature type="binding site" evidence="1">
    <location>
        <position position="74"/>
    </location>
    <ligand>
        <name>Zn(2+)</name>
        <dbReference type="ChEBI" id="CHEBI:29105"/>
        <label>1</label>
    </ligand>
</feature>
<feature type="binding site" evidence="1">
    <location>
        <position position="87"/>
    </location>
    <ligand>
        <name>Zn(2+)</name>
        <dbReference type="ChEBI" id="CHEBI:29105"/>
        <label>1</label>
    </ligand>
</feature>
<feature type="binding site" evidence="1">
    <location>
        <position position="90"/>
    </location>
    <ligand>
        <name>Zn(2+)</name>
        <dbReference type="ChEBI" id="CHEBI:29105"/>
        <label>1</label>
    </ligand>
</feature>
<feature type="binding site" evidence="1">
    <location>
        <position position="462"/>
    </location>
    <ligand>
        <name>Mg(2+)</name>
        <dbReference type="ChEBI" id="CHEBI:18420"/>
    </ligand>
</feature>
<feature type="binding site" evidence="1">
    <location>
        <position position="464"/>
    </location>
    <ligand>
        <name>Mg(2+)</name>
        <dbReference type="ChEBI" id="CHEBI:18420"/>
    </ligand>
</feature>
<feature type="binding site" evidence="1">
    <location>
        <position position="466"/>
    </location>
    <ligand>
        <name>Mg(2+)</name>
        <dbReference type="ChEBI" id="CHEBI:18420"/>
    </ligand>
</feature>
<feature type="binding site" evidence="1">
    <location>
        <position position="816"/>
    </location>
    <ligand>
        <name>Zn(2+)</name>
        <dbReference type="ChEBI" id="CHEBI:29105"/>
        <label>2</label>
    </ligand>
</feature>
<feature type="binding site" evidence="1">
    <location>
        <position position="890"/>
    </location>
    <ligand>
        <name>Zn(2+)</name>
        <dbReference type="ChEBI" id="CHEBI:29105"/>
        <label>2</label>
    </ligand>
</feature>
<feature type="binding site" evidence="1">
    <location>
        <position position="897"/>
    </location>
    <ligand>
        <name>Zn(2+)</name>
        <dbReference type="ChEBI" id="CHEBI:29105"/>
        <label>2</label>
    </ligand>
</feature>
<feature type="binding site" evidence="1">
    <location>
        <position position="900"/>
    </location>
    <ligand>
        <name>Zn(2+)</name>
        <dbReference type="ChEBI" id="CHEBI:29105"/>
        <label>2</label>
    </ligand>
</feature>
<dbReference type="EC" id="2.7.7.6" evidence="1"/>
<dbReference type="EMBL" id="AM421808">
    <property type="protein sequence ID" value="CAM09443.1"/>
    <property type="molecule type" value="Genomic_DNA"/>
</dbReference>
<dbReference type="RefSeq" id="WP_002220157.1">
    <property type="nucleotide sequence ID" value="NC_008767.1"/>
</dbReference>
<dbReference type="SMR" id="A1KRG7"/>
<dbReference type="KEGG" id="nmc:NMC0124"/>
<dbReference type="HOGENOM" id="CLU_000524_3_1_4"/>
<dbReference type="Proteomes" id="UP000002286">
    <property type="component" value="Chromosome"/>
</dbReference>
<dbReference type="GO" id="GO:0000428">
    <property type="term" value="C:DNA-directed RNA polymerase complex"/>
    <property type="evidence" value="ECO:0007669"/>
    <property type="project" value="UniProtKB-KW"/>
</dbReference>
<dbReference type="GO" id="GO:0003677">
    <property type="term" value="F:DNA binding"/>
    <property type="evidence" value="ECO:0007669"/>
    <property type="project" value="UniProtKB-UniRule"/>
</dbReference>
<dbReference type="GO" id="GO:0003899">
    <property type="term" value="F:DNA-directed RNA polymerase activity"/>
    <property type="evidence" value="ECO:0007669"/>
    <property type="project" value="UniProtKB-UniRule"/>
</dbReference>
<dbReference type="GO" id="GO:0000287">
    <property type="term" value="F:magnesium ion binding"/>
    <property type="evidence" value="ECO:0007669"/>
    <property type="project" value="UniProtKB-UniRule"/>
</dbReference>
<dbReference type="GO" id="GO:0008270">
    <property type="term" value="F:zinc ion binding"/>
    <property type="evidence" value="ECO:0007669"/>
    <property type="project" value="UniProtKB-UniRule"/>
</dbReference>
<dbReference type="GO" id="GO:0006351">
    <property type="term" value="P:DNA-templated transcription"/>
    <property type="evidence" value="ECO:0007669"/>
    <property type="project" value="UniProtKB-UniRule"/>
</dbReference>
<dbReference type="CDD" id="cd02655">
    <property type="entry name" value="RNAP_beta'_C"/>
    <property type="match status" value="1"/>
</dbReference>
<dbReference type="CDD" id="cd01609">
    <property type="entry name" value="RNAP_beta'_N"/>
    <property type="match status" value="1"/>
</dbReference>
<dbReference type="FunFam" id="1.10.132.30:FF:000003">
    <property type="entry name" value="DNA-directed RNA polymerase subunit beta"/>
    <property type="match status" value="1"/>
</dbReference>
<dbReference type="FunFam" id="1.10.150.390:FF:000002">
    <property type="entry name" value="DNA-directed RNA polymerase subunit beta"/>
    <property type="match status" value="1"/>
</dbReference>
<dbReference type="FunFam" id="4.10.860.120:FF:000001">
    <property type="entry name" value="DNA-directed RNA polymerase subunit beta"/>
    <property type="match status" value="1"/>
</dbReference>
<dbReference type="Gene3D" id="1.10.132.30">
    <property type="match status" value="1"/>
</dbReference>
<dbReference type="Gene3D" id="1.10.150.390">
    <property type="match status" value="1"/>
</dbReference>
<dbReference type="Gene3D" id="1.10.1790.20">
    <property type="match status" value="1"/>
</dbReference>
<dbReference type="Gene3D" id="1.10.40.90">
    <property type="match status" value="1"/>
</dbReference>
<dbReference type="Gene3D" id="2.40.40.20">
    <property type="match status" value="1"/>
</dbReference>
<dbReference type="Gene3D" id="2.40.50.100">
    <property type="match status" value="3"/>
</dbReference>
<dbReference type="Gene3D" id="4.10.860.120">
    <property type="entry name" value="RNA polymerase II, clamp domain"/>
    <property type="match status" value="1"/>
</dbReference>
<dbReference type="Gene3D" id="1.10.274.100">
    <property type="entry name" value="RNA polymerase Rpb1, domain 3"/>
    <property type="match status" value="1"/>
</dbReference>
<dbReference type="HAMAP" id="MF_01322">
    <property type="entry name" value="RNApol_bact_RpoC"/>
    <property type="match status" value="1"/>
</dbReference>
<dbReference type="InterPro" id="IPR045867">
    <property type="entry name" value="DNA-dir_RpoC_beta_prime"/>
</dbReference>
<dbReference type="InterPro" id="IPR012754">
    <property type="entry name" value="DNA-dir_RpoC_beta_prime_bact"/>
</dbReference>
<dbReference type="InterPro" id="IPR000722">
    <property type="entry name" value="RNA_pol_asu"/>
</dbReference>
<dbReference type="InterPro" id="IPR006592">
    <property type="entry name" value="RNA_pol_N"/>
</dbReference>
<dbReference type="InterPro" id="IPR007080">
    <property type="entry name" value="RNA_pol_Rpb1_1"/>
</dbReference>
<dbReference type="InterPro" id="IPR007066">
    <property type="entry name" value="RNA_pol_Rpb1_3"/>
</dbReference>
<dbReference type="InterPro" id="IPR042102">
    <property type="entry name" value="RNA_pol_Rpb1_3_sf"/>
</dbReference>
<dbReference type="InterPro" id="IPR007083">
    <property type="entry name" value="RNA_pol_Rpb1_4"/>
</dbReference>
<dbReference type="InterPro" id="IPR007081">
    <property type="entry name" value="RNA_pol_Rpb1_5"/>
</dbReference>
<dbReference type="InterPro" id="IPR044893">
    <property type="entry name" value="RNA_pol_Rpb1_clamp_domain"/>
</dbReference>
<dbReference type="InterPro" id="IPR038120">
    <property type="entry name" value="Rpb1_funnel_sf"/>
</dbReference>
<dbReference type="NCBIfam" id="TIGR02386">
    <property type="entry name" value="rpoC_TIGR"/>
    <property type="match status" value="1"/>
</dbReference>
<dbReference type="PANTHER" id="PTHR19376">
    <property type="entry name" value="DNA-DIRECTED RNA POLYMERASE"/>
    <property type="match status" value="1"/>
</dbReference>
<dbReference type="PANTHER" id="PTHR19376:SF54">
    <property type="entry name" value="DNA-DIRECTED RNA POLYMERASE SUBUNIT BETA"/>
    <property type="match status" value="1"/>
</dbReference>
<dbReference type="Pfam" id="PF04997">
    <property type="entry name" value="RNA_pol_Rpb1_1"/>
    <property type="match status" value="1"/>
</dbReference>
<dbReference type="Pfam" id="PF00623">
    <property type="entry name" value="RNA_pol_Rpb1_2"/>
    <property type="match status" value="2"/>
</dbReference>
<dbReference type="Pfam" id="PF04983">
    <property type="entry name" value="RNA_pol_Rpb1_3"/>
    <property type="match status" value="1"/>
</dbReference>
<dbReference type="Pfam" id="PF05000">
    <property type="entry name" value="RNA_pol_Rpb1_4"/>
    <property type="match status" value="1"/>
</dbReference>
<dbReference type="Pfam" id="PF04998">
    <property type="entry name" value="RNA_pol_Rpb1_5"/>
    <property type="match status" value="1"/>
</dbReference>
<dbReference type="SMART" id="SM00663">
    <property type="entry name" value="RPOLA_N"/>
    <property type="match status" value="1"/>
</dbReference>
<dbReference type="SUPFAM" id="SSF64484">
    <property type="entry name" value="beta and beta-prime subunits of DNA dependent RNA-polymerase"/>
    <property type="match status" value="1"/>
</dbReference>
<evidence type="ECO:0000255" key="1">
    <source>
        <dbReference type="HAMAP-Rule" id="MF_01322"/>
    </source>
</evidence>
<protein>
    <recommendedName>
        <fullName evidence="1">DNA-directed RNA polymerase subunit beta'</fullName>
        <shortName evidence="1">RNAP subunit beta'</shortName>
        <ecNumber evidence="1">2.7.7.6</ecNumber>
    </recommendedName>
    <alternativeName>
        <fullName evidence="1">RNA polymerase subunit beta'</fullName>
    </alternativeName>
    <alternativeName>
        <fullName evidence="1">Transcriptase subunit beta'</fullName>
    </alternativeName>
</protein>
<keyword id="KW-0240">DNA-directed RNA polymerase</keyword>
<keyword id="KW-0460">Magnesium</keyword>
<keyword id="KW-0479">Metal-binding</keyword>
<keyword id="KW-0548">Nucleotidyltransferase</keyword>
<keyword id="KW-0804">Transcription</keyword>
<keyword id="KW-0808">Transferase</keyword>
<keyword id="KW-0862">Zinc</keyword>
<reference key="1">
    <citation type="journal article" date="2007" name="PLoS Genet.">
        <title>Meningococcal genetic variation mechanisms viewed through comparative analysis of serogroup C strain FAM18.</title>
        <authorList>
            <person name="Bentley S.D."/>
            <person name="Vernikos G.S."/>
            <person name="Snyder L.A.S."/>
            <person name="Churcher C."/>
            <person name="Arrowsmith C."/>
            <person name="Chillingworth T."/>
            <person name="Cronin A."/>
            <person name="Davis P.H."/>
            <person name="Holroyd N.E."/>
            <person name="Jagels K."/>
            <person name="Maddison M."/>
            <person name="Moule S."/>
            <person name="Rabbinowitsch E."/>
            <person name="Sharp S."/>
            <person name="Unwin L."/>
            <person name="Whitehead S."/>
            <person name="Quail M.A."/>
            <person name="Achtman M."/>
            <person name="Barrell B.G."/>
            <person name="Saunders N.J."/>
            <person name="Parkhill J."/>
        </authorList>
    </citation>
    <scope>NUCLEOTIDE SEQUENCE [LARGE SCALE GENOMIC DNA]</scope>
    <source>
        <strain>ATCC 700532 / DSM 15464 / FAM18</strain>
    </source>
</reference>
<accession>A1KRG7</accession>
<proteinExistence type="inferred from homology"/>
<comment type="function">
    <text evidence="1">DNA-dependent RNA polymerase catalyzes the transcription of DNA into RNA using the four ribonucleoside triphosphates as substrates.</text>
</comment>
<comment type="catalytic activity">
    <reaction evidence="1">
        <text>RNA(n) + a ribonucleoside 5'-triphosphate = RNA(n+1) + diphosphate</text>
        <dbReference type="Rhea" id="RHEA:21248"/>
        <dbReference type="Rhea" id="RHEA-COMP:14527"/>
        <dbReference type="Rhea" id="RHEA-COMP:17342"/>
        <dbReference type="ChEBI" id="CHEBI:33019"/>
        <dbReference type="ChEBI" id="CHEBI:61557"/>
        <dbReference type="ChEBI" id="CHEBI:140395"/>
        <dbReference type="EC" id="2.7.7.6"/>
    </reaction>
</comment>
<comment type="cofactor">
    <cofactor evidence="1">
        <name>Mg(2+)</name>
        <dbReference type="ChEBI" id="CHEBI:18420"/>
    </cofactor>
    <text evidence="1">Binds 1 Mg(2+) ion per subunit.</text>
</comment>
<comment type="cofactor">
    <cofactor evidence="1">
        <name>Zn(2+)</name>
        <dbReference type="ChEBI" id="CHEBI:29105"/>
    </cofactor>
    <text evidence="1">Binds 2 Zn(2+) ions per subunit.</text>
</comment>
<comment type="subunit">
    <text evidence="1">The RNAP catalytic core consists of 2 alpha, 1 beta, 1 beta' and 1 omega subunit. When a sigma factor is associated with the core the holoenzyme is formed, which can initiate transcription.</text>
</comment>
<comment type="similarity">
    <text evidence="1">Belongs to the RNA polymerase beta' chain family.</text>
</comment>
<organism>
    <name type="scientific">Neisseria meningitidis serogroup C / serotype 2a (strain ATCC 700532 / DSM 15464 / FAM18)</name>
    <dbReference type="NCBI Taxonomy" id="272831"/>
    <lineage>
        <taxon>Bacteria</taxon>
        <taxon>Pseudomonadati</taxon>
        <taxon>Pseudomonadota</taxon>
        <taxon>Betaproteobacteria</taxon>
        <taxon>Neisseriales</taxon>
        <taxon>Neisseriaceae</taxon>
        <taxon>Neisseria</taxon>
    </lineage>
</organism>